<organism>
    <name type="scientific">Bacillus cereus (strain Q1)</name>
    <dbReference type="NCBI Taxonomy" id="361100"/>
    <lineage>
        <taxon>Bacteria</taxon>
        <taxon>Bacillati</taxon>
        <taxon>Bacillota</taxon>
        <taxon>Bacilli</taxon>
        <taxon>Bacillales</taxon>
        <taxon>Bacillaceae</taxon>
        <taxon>Bacillus</taxon>
        <taxon>Bacillus cereus group</taxon>
    </lineage>
</organism>
<sequence length="444" mass="49727">MHILVVSVNYRTAPVEFREKLTFQAAELEQAMTTLQNQKSVLENVIVSTCNRTEVYAVVDQLHTGRYYIKKFLADWFQLEIEEVAPYLTIFEQDGAIDHLFRVTCGLDSMVVGETQILGQIKDSFLEAQQVKATGTIFNELFKQVITLAKRAHSETTIGESAMSVSYAAVELGKKIFGELTDCHVLILGAGKMGELALQNLYGSGARKVTVMNRTLSKAEIMAEKYMGHAKPLSELQCALLEADILISSTGASDYVITKEMMTKVEKMRSGRPLFMVDIAVPRDIDPAIDELEGSFLYDIDDLQGVVEANRAERLKEAEKIQFMIEEEIVVFKTWLSTLGVVPLISALRDKALAIQSETMESLERKIPTLSDRERKVISKHTKSIINQLLKDPILVAKEIAAEEGADEKLALFAKIFDLEMEDVESRAEEVEHKRAWTPSVPSL</sequence>
<proteinExistence type="inferred from homology"/>
<accession>B9IZ41</accession>
<feature type="chain" id="PRO_1000190508" description="Glutamyl-tRNA reductase">
    <location>
        <begin position="1"/>
        <end position="444"/>
    </location>
</feature>
<feature type="active site" description="Nucleophile" evidence="1">
    <location>
        <position position="50"/>
    </location>
</feature>
<feature type="binding site" evidence="1">
    <location>
        <begin position="49"/>
        <end position="52"/>
    </location>
    <ligand>
        <name>substrate</name>
    </ligand>
</feature>
<feature type="binding site" evidence="1">
    <location>
        <position position="109"/>
    </location>
    <ligand>
        <name>substrate</name>
    </ligand>
</feature>
<feature type="binding site" evidence="1">
    <location>
        <begin position="114"/>
        <end position="116"/>
    </location>
    <ligand>
        <name>substrate</name>
    </ligand>
</feature>
<feature type="binding site" evidence="1">
    <location>
        <position position="120"/>
    </location>
    <ligand>
        <name>substrate</name>
    </ligand>
</feature>
<feature type="binding site" evidence="1">
    <location>
        <begin position="189"/>
        <end position="194"/>
    </location>
    <ligand>
        <name>NADP(+)</name>
        <dbReference type="ChEBI" id="CHEBI:58349"/>
    </ligand>
</feature>
<feature type="site" description="Important for activity" evidence="1">
    <location>
        <position position="99"/>
    </location>
</feature>
<comment type="function">
    <text evidence="1">Catalyzes the NADPH-dependent reduction of glutamyl-tRNA(Glu) to glutamate 1-semialdehyde (GSA).</text>
</comment>
<comment type="catalytic activity">
    <reaction evidence="1">
        <text>(S)-4-amino-5-oxopentanoate + tRNA(Glu) + NADP(+) = L-glutamyl-tRNA(Glu) + NADPH + H(+)</text>
        <dbReference type="Rhea" id="RHEA:12344"/>
        <dbReference type="Rhea" id="RHEA-COMP:9663"/>
        <dbReference type="Rhea" id="RHEA-COMP:9680"/>
        <dbReference type="ChEBI" id="CHEBI:15378"/>
        <dbReference type="ChEBI" id="CHEBI:57501"/>
        <dbReference type="ChEBI" id="CHEBI:57783"/>
        <dbReference type="ChEBI" id="CHEBI:58349"/>
        <dbReference type="ChEBI" id="CHEBI:78442"/>
        <dbReference type="ChEBI" id="CHEBI:78520"/>
        <dbReference type="EC" id="1.2.1.70"/>
    </reaction>
</comment>
<comment type="pathway">
    <text evidence="1">Porphyrin-containing compound metabolism; protoporphyrin-IX biosynthesis; 5-aminolevulinate from L-glutamyl-tRNA(Glu): step 1/2.</text>
</comment>
<comment type="subunit">
    <text evidence="1">Homodimer.</text>
</comment>
<comment type="domain">
    <text evidence="1">Possesses an unusual extended V-shaped dimeric structure with each monomer consisting of three distinct domains arranged along a curved 'spinal' alpha-helix. The N-terminal catalytic domain specifically recognizes the glutamate moiety of the substrate. The second domain is the NADPH-binding domain, and the third C-terminal domain is responsible for dimerization.</text>
</comment>
<comment type="miscellaneous">
    <text evidence="1">During catalysis, the active site Cys acts as a nucleophile attacking the alpha-carbonyl group of tRNA-bound glutamate with the formation of a thioester intermediate between enzyme and glutamate, and the concomitant release of tRNA(Glu). The thioester intermediate is finally reduced by direct hydride transfer from NADPH, to form the product GSA.</text>
</comment>
<comment type="similarity">
    <text evidence="1">Belongs to the glutamyl-tRNA reductase family.</text>
</comment>
<dbReference type="EC" id="1.2.1.70" evidence="1"/>
<dbReference type="EMBL" id="CP000227">
    <property type="protein sequence ID" value="ACM14680.1"/>
    <property type="molecule type" value="Genomic_DNA"/>
</dbReference>
<dbReference type="SMR" id="B9IZ41"/>
<dbReference type="KEGG" id="bcq:BCQ_4253"/>
<dbReference type="HOGENOM" id="CLU_035113_2_2_9"/>
<dbReference type="UniPathway" id="UPA00251">
    <property type="reaction ID" value="UER00316"/>
</dbReference>
<dbReference type="Proteomes" id="UP000000441">
    <property type="component" value="Chromosome"/>
</dbReference>
<dbReference type="GO" id="GO:0008883">
    <property type="term" value="F:glutamyl-tRNA reductase activity"/>
    <property type="evidence" value="ECO:0007669"/>
    <property type="project" value="UniProtKB-UniRule"/>
</dbReference>
<dbReference type="GO" id="GO:0050661">
    <property type="term" value="F:NADP binding"/>
    <property type="evidence" value="ECO:0007669"/>
    <property type="project" value="InterPro"/>
</dbReference>
<dbReference type="GO" id="GO:0006782">
    <property type="term" value="P:protoporphyrinogen IX biosynthetic process"/>
    <property type="evidence" value="ECO:0007669"/>
    <property type="project" value="UniProtKB-UniRule"/>
</dbReference>
<dbReference type="CDD" id="cd05213">
    <property type="entry name" value="NAD_bind_Glutamyl_tRNA_reduct"/>
    <property type="match status" value="1"/>
</dbReference>
<dbReference type="FunFam" id="3.30.460.30:FF:000001">
    <property type="entry name" value="Glutamyl-tRNA reductase"/>
    <property type="match status" value="1"/>
</dbReference>
<dbReference type="FunFam" id="3.40.50.720:FF:000031">
    <property type="entry name" value="Glutamyl-tRNA reductase"/>
    <property type="match status" value="1"/>
</dbReference>
<dbReference type="Gene3D" id="3.30.460.30">
    <property type="entry name" value="Glutamyl-tRNA reductase, N-terminal domain"/>
    <property type="match status" value="1"/>
</dbReference>
<dbReference type="Gene3D" id="3.40.50.720">
    <property type="entry name" value="NAD(P)-binding Rossmann-like Domain"/>
    <property type="match status" value="1"/>
</dbReference>
<dbReference type="HAMAP" id="MF_00087">
    <property type="entry name" value="Glu_tRNA_reductase"/>
    <property type="match status" value="1"/>
</dbReference>
<dbReference type="InterPro" id="IPR000343">
    <property type="entry name" value="4pyrrol_synth_GluRdtase"/>
</dbReference>
<dbReference type="InterPro" id="IPR015896">
    <property type="entry name" value="4pyrrol_synth_GluRdtase_dimer"/>
</dbReference>
<dbReference type="InterPro" id="IPR015895">
    <property type="entry name" value="4pyrrol_synth_GluRdtase_N"/>
</dbReference>
<dbReference type="InterPro" id="IPR018214">
    <property type="entry name" value="GluRdtase_CS"/>
</dbReference>
<dbReference type="InterPro" id="IPR036453">
    <property type="entry name" value="GluRdtase_dimer_dom_sf"/>
</dbReference>
<dbReference type="InterPro" id="IPR036343">
    <property type="entry name" value="GluRdtase_N_sf"/>
</dbReference>
<dbReference type="InterPro" id="IPR036291">
    <property type="entry name" value="NAD(P)-bd_dom_sf"/>
</dbReference>
<dbReference type="InterPro" id="IPR006151">
    <property type="entry name" value="Shikm_DH/Glu-tRNA_Rdtase"/>
</dbReference>
<dbReference type="NCBIfam" id="TIGR01035">
    <property type="entry name" value="hemA"/>
    <property type="match status" value="1"/>
</dbReference>
<dbReference type="PANTHER" id="PTHR43120">
    <property type="entry name" value="GLUTAMYL-TRNA REDUCTASE 1, CHLOROPLASTIC"/>
    <property type="match status" value="1"/>
</dbReference>
<dbReference type="PANTHER" id="PTHR43120:SF1">
    <property type="entry name" value="GLUTAMYL-TRNA REDUCTASE 1, CHLOROPLASTIC"/>
    <property type="match status" value="1"/>
</dbReference>
<dbReference type="Pfam" id="PF00745">
    <property type="entry name" value="GlutR_dimer"/>
    <property type="match status" value="1"/>
</dbReference>
<dbReference type="Pfam" id="PF05201">
    <property type="entry name" value="GlutR_N"/>
    <property type="match status" value="1"/>
</dbReference>
<dbReference type="Pfam" id="PF01488">
    <property type="entry name" value="Shikimate_DH"/>
    <property type="match status" value="1"/>
</dbReference>
<dbReference type="PIRSF" id="PIRSF000445">
    <property type="entry name" value="4pyrrol_synth_GluRdtase"/>
    <property type="match status" value="1"/>
</dbReference>
<dbReference type="SUPFAM" id="SSF69742">
    <property type="entry name" value="Glutamyl tRNA-reductase catalytic, N-terminal domain"/>
    <property type="match status" value="1"/>
</dbReference>
<dbReference type="SUPFAM" id="SSF69075">
    <property type="entry name" value="Glutamyl tRNA-reductase dimerization domain"/>
    <property type="match status" value="1"/>
</dbReference>
<dbReference type="SUPFAM" id="SSF51735">
    <property type="entry name" value="NAD(P)-binding Rossmann-fold domains"/>
    <property type="match status" value="1"/>
</dbReference>
<dbReference type="PROSITE" id="PS00747">
    <property type="entry name" value="GLUTR"/>
    <property type="match status" value="1"/>
</dbReference>
<reference key="1">
    <citation type="journal article" date="2009" name="J. Bacteriol.">
        <title>Complete genome sequence of the extremophilic Bacillus cereus strain Q1 with industrial applications.</title>
        <authorList>
            <person name="Xiong Z."/>
            <person name="Jiang Y."/>
            <person name="Qi D."/>
            <person name="Lu H."/>
            <person name="Yang F."/>
            <person name="Yang J."/>
            <person name="Chen L."/>
            <person name="Sun L."/>
            <person name="Xu X."/>
            <person name="Xue Y."/>
            <person name="Zhu Y."/>
            <person name="Jin Q."/>
        </authorList>
    </citation>
    <scope>NUCLEOTIDE SEQUENCE [LARGE SCALE GENOMIC DNA]</scope>
    <source>
        <strain>Q1</strain>
    </source>
</reference>
<gene>
    <name evidence="1" type="primary">hemA</name>
    <name type="ordered locus">BCQ_4253</name>
</gene>
<keyword id="KW-0521">NADP</keyword>
<keyword id="KW-0560">Oxidoreductase</keyword>
<keyword id="KW-0627">Porphyrin biosynthesis</keyword>
<name>HEM1_BACCQ</name>
<protein>
    <recommendedName>
        <fullName evidence="1">Glutamyl-tRNA reductase</fullName>
        <shortName evidence="1">GluTR</shortName>
        <ecNumber evidence="1">1.2.1.70</ecNumber>
    </recommendedName>
</protein>
<evidence type="ECO:0000255" key="1">
    <source>
        <dbReference type="HAMAP-Rule" id="MF_00087"/>
    </source>
</evidence>